<organism>
    <name type="scientific">Yersinia enterocolitica</name>
    <dbReference type="NCBI Taxonomy" id="630"/>
    <lineage>
        <taxon>Bacteria</taxon>
        <taxon>Pseudomonadati</taxon>
        <taxon>Pseudomonadota</taxon>
        <taxon>Gammaproteobacteria</taxon>
        <taxon>Enterobacterales</taxon>
        <taxon>Yersiniaceae</taxon>
        <taxon>Yersinia</taxon>
    </lineage>
</organism>
<evidence type="ECO:0000250" key="1"/>
<evidence type="ECO:0000256" key="2">
    <source>
        <dbReference type="SAM" id="MobiDB-lite"/>
    </source>
</evidence>
<evidence type="ECO:0000269" key="3">
    <source>
    </source>
</evidence>
<evidence type="ECO:0000305" key="4"/>
<sequence length="322" mass="36439">MDSIHGHYHIQLSNYSAGENLQSATLTEGVIGAHRVKVETALSHSNRQKKLSATIKHNQSSRSMLDRKLTSDGKANQRSSFTFSMIMYRMIHFVLSTRVPAVRESVANYGGNINFKFAQTKGAFLHQIIKHSDTASGVCEALCAHWIWSHAQGQSLFDQLYVGGRKGKFQIDTLYSIKQLQIDGCKADVDQDEVTLDWFKKKGISERMIERHCLLRPVDVTGTTESEGPDQLLNAILDTHGIGYGYKKIYLSGQMSAHAIAAYVNEKSGVTFFDPNFGEFHFSDKEKFRKWFTNSFWENSMYHYPLGVGQRFSVLTFDSKEV</sequence>
<gene>
    <name type="primary">yopT</name>
</gene>
<geneLocation type="plasmid">
    <name>pYVe227</name>
</geneLocation>
<geneLocation type="plasmid">
    <name>pYV</name>
</geneLocation>
<keyword id="KW-0378">Hydrolase</keyword>
<keyword id="KW-0614">Plasmid</keyword>
<keyword id="KW-0645">Protease</keyword>
<keyword id="KW-0964">Secreted</keyword>
<keyword id="KW-0788">Thiol protease</keyword>
<keyword id="KW-0843">Virulence</keyword>
<name>YOPT_YEREN</name>
<feature type="chain" id="PRO_0000192511" description="Cysteine protease YopT">
    <location>
        <begin position="1"/>
        <end position="322"/>
    </location>
</feature>
<feature type="region of interest" description="Disordered" evidence="2">
    <location>
        <begin position="43"/>
        <end position="72"/>
    </location>
</feature>
<feature type="active site" evidence="1">
    <location>
        <position position="139"/>
    </location>
</feature>
<feature type="active site" evidence="1">
    <location>
        <position position="258"/>
    </location>
</feature>
<feature type="active site" evidence="1">
    <location>
        <position position="274"/>
    </location>
</feature>
<comment type="function">
    <text evidence="1">Cysteine protease, which is translocated into infected cells and plays a central role in pathogenesis by cleaving the C-terminus end of the human small GTPase RhoA/ARHA, a regulator of cytoskeleton. Once cleaved, ARHA loses its lipid modification, and is released from the cell membrane, leading to the subsequent disruption of actin cytoskeleton of the host cell (By similarity).</text>
</comment>
<comment type="subunit">
    <text evidence="1">Interacts with human ARHA.</text>
</comment>
<comment type="subcellular location">
    <subcellularLocation>
        <location evidence="3">Secreted</location>
    </subcellularLocation>
    <text>In infected cells, it is cytoplasmic. Translocated into the host cell by the type III secretion apparatus with the help of the SycT chaperone.</text>
</comment>
<comment type="similarity">
    <text evidence="4">Belongs to the peptidase C58 family.</text>
</comment>
<dbReference type="EC" id="3.4.22.-"/>
<dbReference type="EMBL" id="AF102990">
    <property type="protein sequence ID" value="AAD16808.1"/>
    <property type="molecule type" value="Genomic_DNA"/>
</dbReference>
<dbReference type="EMBL" id="X52753">
    <property type="protein sequence ID" value="CAA36963.1"/>
    <property type="molecule type" value="Genomic_DNA"/>
</dbReference>
<dbReference type="PIR" id="S14239">
    <property type="entry name" value="S14239"/>
</dbReference>
<dbReference type="RefSeq" id="NP_052385.1">
    <property type="nucleotide sequence ID" value="NC_002120.1"/>
</dbReference>
<dbReference type="RefSeq" id="WP_010891203.1">
    <property type="nucleotide sequence ID" value="NZ_KN150737.1"/>
</dbReference>
<dbReference type="SMR" id="P27475"/>
<dbReference type="MEROPS" id="C58.001"/>
<dbReference type="GeneID" id="31412249"/>
<dbReference type="KEGG" id="yet:CH48_4234"/>
<dbReference type="PATRIC" id="fig|630.129.peg.4336"/>
<dbReference type="OMA" id="QSTMTEY"/>
<dbReference type="GO" id="GO:0005576">
    <property type="term" value="C:extracellular region"/>
    <property type="evidence" value="ECO:0007669"/>
    <property type="project" value="UniProtKB-SubCell"/>
</dbReference>
<dbReference type="GO" id="GO:0004197">
    <property type="term" value="F:cysteine-type endopeptidase activity"/>
    <property type="evidence" value="ECO:0007669"/>
    <property type="project" value="InterPro"/>
</dbReference>
<dbReference type="GO" id="GO:0006508">
    <property type="term" value="P:proteolysis"/>
    <property type="evidence" value="ECO:0007669"/>
    <property type="project" value="UniProtKB-KW"/>
</dbReference>
<dbReference type="CDD" id="cd20498">
    <property type="entry name" value="C58_YopT"/>
    <property type="match status" value="1"/>
</dbReference>
<dbReference type="Gene3D" id="3.90.70.20">
    <property type="match status" value="1"/>
</dbReference>
<dbReference type="InterPro" id="IPR038765">
    <property type="entry name" value="Papain-like_cys_pep_sf"/>
</dbReference>
<dbReference type="InterPro" id="IPR003951">
    <property type="entry name" value="Peptidase_C58"/>
</dbReference>
<dbReference type="InterPro" id="IPR006473">
    <property type="entry name" value="Peptidase_C58_Yopt"/>
</dbReference>
<dbReference type="NCBIfam" id="TIGR01586">
    <property type="entry name" value="yopT_cys_prot"/>
    <property type="match status" value="1"/>
</dbReference>
<dbReference type="Pfam" id="PF03543">
    <property type="entry name" value="Peptidase_C58"/>
    <property type="match status" value="1"/>
</dbReference>
<dbReference type="PRINTS" id="PR01376">
    <property type="entry name" value="BACSURFANTGN"/>
</dbReference>
<dbReference type="SUPFAM" id="SSF54001">
    <property type="entry name" value="Cysteine proteinases"/>
    <property type="match status" value="1"/>
</dbReference>
<proteinExistence type="inferred from homology"/>
<accession>P27475</accession>
<accession>Q9S4Y3</accession>
<reference key="1">
    <citation type="journal article" date="1998" name="Mol. Microbiol.">
        <title>YopT, a new Yersinia Yop effector protein, affects the cytoskeleton of host cells.</title>
        <authorList>
            <person name="Iriarte M."/>
            <person name="Cornelis G.R."/>
        </authorList>
    </citation>
    <scope>NUCLEOTIDE SEQUENCE [GENOMIC DNA]</scope>
    <scope>SUBCELLULAR LOCATION</scope>
    <source>
        <strain>W22703 / Serotype O:9 / Biotype 2</strain>
        <plasmid>pYVe227</plasmid>
    </source>
</reference>
<reference key="2">
    <citation type="journal article" date="1990" name="Infect. Immun.">
        <title>Secretion of Yop proteins by Yersiniae.</title>
        <authorList>
            <person name="Michiels T."/>
            <person name="Wattiau P."/>
            <person name="Brasseur R."/>
            <person name="Ruysschaert J.M."/>
            <person name="Cornelis G."/>
        </authorList>
    </citation>
    <scope>NUCLEOTIDE SEQUENCE [GENOMIC DNA] OF 1-155</scope>
    <source>
        <strain>439-80 / Serotype O:9</strain>
        <plasmid>pYV</plasmid>
    </source>
</reference>
<protein>
    <recommendedName>
        <fullName>Cysteine protease YopT</fullName>
        <ecNumber>3.4.22.-</ecNumber>
    </recommendedName>
</protein>